<evidence type="ECO:0000255" key="1">
    <source>
        <dbReference type="HAMAP-Rule" id="MF_00444"/>
    </source>
</evidence>
<evidence type="ECO:0007829" key="2">
    <source>
        <dbReference type="PDB" id="8OLL"/>
    </source>
</evidence>
<accession>Q6GIM3</accession>
<feature type="chain" id="PRO_0000179652" description="ATP-dependent Clp protease proteolytic subunit">
    <location>
        <begin position="1"/>
        <end position="195"/>
    </location>
</feature>
<feature type="active site" description="Nucleophile" evidence="1">
    <location>
        <position position="98"/>
    </location>
</feature>
<feature type="active site" evidence="1">
    <location>
        <position position="123"/>
    </location>
</feature>
<feature type="strand" evidence="2">
    <location>
        <begin position="6"/>
        <end position="10"/>
    </location>
</feature>
<feature type="strand" evidence="2">
    <location>
        <begin position="12"/>
        <end position="19"/>
    </location>
</feature>
<feature type="helix" evidence="2">
    <location>
        <begin position="20"/>
        <end position="26"/>
    </location>
</feature>
<feature type="strand" evidence="2">
    <location>
        <begin position="29"/>
        <end position="32"/>
    </location>
</feature>
<feature type="helix" evidence="2">
    <location>
        <begin position="38"/>
        <end position="54"/>
    </location>
</feature>
<feature type="strand" evidence="2">
    <location>
        <begin position="56"/>
        <end position="58"/>
    </location>
</feature>
<feature type="strand" evidence="2">
    <location>
        <begin position="60"/>
        <end position="66"/>
    </location>
</feature>
<feature type="helix" evidence="2">
    <location>
        <begin position="71"/>
        <end position="83"/>
    </location>
</feature>
<feature type="strand" evidence="2">
    <location>
        <begin position="84"/>
        <end position="86"/>
    </location>
</feature>
<feature type="strand" evidence="2">
    <location>
        <begin position="88"/>
        <end position="97"/>
    </location>
</feature>
<feature type="helix" evidence="2">
    <location>
        <begin position="99"/>
        <end position="105"/>
    </location>
</feature>
<feature type="strand" evidence="2">
    <location>
        <begin position="112"/>
        <end position="114"/>
    </location>
</feature>
<feature type="strand" evidence="2">
    <location>
        <begin position="119"/>
        <end position="122"/>
    </location>
</feature>
<feature type="strand" evidence="2">
    <location>
        <begin position="126"/>
        <end position="132"/>
    </location>
</feature>
<feature type="helix" evidence="2">
    <location>
        <begin position="133"/>
        <end position="158"/>
    </location>
</feature>
<feature type="helix" evidence="2">
    <location>
        <begin position="162"/>
        <end position="168"/>
    </location>
</feature>
<feature type="strand" evidence="2">
    <location>
        <begin position="173"/>
        <end position="175"/>
    </location>
</feature>
<feature type="helix" evidence="2">
    <location>
        <begin position="177"/>
        <end position="183"/>
    </location>
</feature>
<feature type="strand" evidence="2">
    <location>
        <begin position="187"/>
        <end position="189"/>
    </location>
</feature>
<proteinExistence type="evidence at protein level"/>
<gene>
    <name evidence="1" type="primary">clpP</name>
    <name type="ordered locus">SAR0823</name>
</gene>
<reference key="1">
    <citation type="journal article" date="2004" name="Proc. Natl. Acad. Sci. U.S.A.">
        <title>Complete genomes of two clinical Staphylococcus aureus strains: evidence for the rapid evolution of virulence and drug resistance.</title>
        <authorList>
            <person name="Holden M.T.G."/>
            <person name="Feil E.J."/>
            <person name="Lindsay J.A."/>
            <person name="Peacock S.J."/>
            <person name="Day N.P.J."/>
            <person name="Enright M.C."/>
            <person name="Foster T.J."/>
            <person name="Moore C.E."/>
            <person name="Hurst L."/>
            <person name="Atkin R."/>
            <person name="Barron A."/>
            <person name="Bason N."/>
            <person name="Bentley S.D."/>
            <person name="Chillingworth C."/>
            <person name="Chillingworth T."/>
            <person name="Churcher C."/>
            <person name="Clark L."/>
            <person name="Corton C."/>
            <person name="Cronin A."/>
            <person name="Doggett J."/>
            <person name="Dowd L."/>
            <person name="Feltwell T."/>
            <person name="Hance Z."/>
            <person name="Harris B."/>
            <person name="Hauser H."/>
            <person name="Holroyd S."/>
            <person name="Jagels K."/>
            <person name="James K.D."/>
            <person name="Lennard N."/>
            <person name="Line A."/>
            <person name="Mayes R."/>
            <person name="Moule S."/>
            <person name="Mungall K."/>
            <person name="Ormond D."/>
            <person name="Quail M.A."/>
            <person name="Rabbinowitsch E."/>
            <person name="Rutherford K.M."/>
            <person name="Sanders M."/>
            <person name="Sharp S."/>
            <person name="Simmonds M."/>
            <person name="Stevens K."/>
            <person name="Whitehead S."/>
            <person name="Barrell B.G."/>
            <person name="Spratt B.G."/>
            <person name="Parkhill J."/>
        </authorList>
    </citation>
    <scope>NUCLEOTIDE SEQUENCE [LARGE SCALE GENOMIC DNA]</scope>
    <source>
        <strain>MRSA252</strain>
    </source>
</reference>
<name>CLPP_STAAR</name>
<protein>
    <recommendedName>
        <fullName evidence="1">ATP-dependent Clp protease proteolytic subunit</fullName>
        <ecNumber evidence="1">3.4.21.92</ecNumber>
    </recommendedName>
    <alternativeName>
        <fullName evidence="1">Endopeptidase Clp</fullName>
    </alternativeName>
</protein>
<keyword id="KW-0002">3D-structure</keyword>
<keyword id="KW-0963">Cytoplasm</keyword>
<keyword id="KW-0378">Hydrolase</keyword>
<keyword id="KW-0645">Protease</keyword>
<keyword id="KW-0720">Serine protease</keyword>
<dbReference type="EC" id="3.4.21.92" evidence="1"/>
<dbReference type="EMBL" id="BX571856">
    <property type="protein sequence ID" value="CAG39832.1"/>
    <property type="molecule type" value="Genomic_DNA"/>
</dbReference>
<dbReference type="RefSeq" id="WP_001049165.1">
    <property type="nucleotide sequence ID" value="NC_002952.2"/>
</dbReference>
<dbReference type="PDB" id="8OLL">
    <property type="method" value="X-ray"/>
    <property type="resolution" value="2.70 A"/>
    <property type="chains" value="A/B/C/D/E/F/G/H/I/J/K/L/M/N/O/P/Q/R/S/T/U/V/W/X/Y/Z/a/b=1-195"/>
</dbReference>
<dbReference type="PDBsum" id="8OLL"/>
<dbReference type="SMR" id="Q6GIM3"/>
<dbReference type="MEROPS" id="S14.001"/>
<dbReference type="GeneID" id="98345115"/>
<dbReference type="KEGG" id="sar:SAR0823"/>
<dbReference type="HOGENOM" id="CLU_058707_3_2_9"/>
<dbReference type="Proteomes" id="UP000000596">
    <property type="component" value="Chromosome"/>
</dbReference>
<dbReference type="GO" id="GO:0005737">
    <property type="term" value="C:cytoplasm"/>
    <property type="evidence" value="ECO:0007669"/>
    <property type="project" value="UniProtKB-SubCell"/>
</dbReference>
<dbReference type="GO" id="GO:0009368">
    <property type="term" value="C:endopeptidase Clp complex"/>
    <property type="evidence" value="ECO:0007669"/>
    <property type="project" value="TreeGrafter"/>
</dbReference>
<dbReference type="GO" id="GO:0004176">
    <property type="term" value="F:ATP-dependent peptidase activity"/>
    <property type="evidence" value="ECO:0007669"/>
    <property type="project" value="InterPro"/>
</dbReference>
<dbReference type="GO" id="GO:0051117">
    <property type="term" value="F:ATPase binding"/>
    <property type="evidence" value="ECO:0007669"/>
    <property type="project" value="TreeGrafter"/>
</dbReference>
<dbReference type="GO" id="GO:0004252">
    <property type="term" value="F:serine-type endopeptidase activity"/>
    <property type="evidence" value="ECO:0007669"/>
    <property type="project" value="UniProtKB-UniRule"/>
</dbReference>
<dbReference type="GO" id="GO:0006515">
    <property type="term" value="P:protein quality control for misfolded or incompletely synthesized proteins"/>
    <property type="evidence" value="ECO:0007669"/>
    <property type="project" value="TreeGrafter"/>
</dbReference>
<dbReference type="CDD" id="cd07017">
    <property type="entry name" value="S14_ClpP_2"/>
    <property type="match status" value="1"/>
</dbReference>
<dbReference type="FunFam" id="3.90.226.10:FF:000001">
    <property type="entry name" value="ATP-dependent Clp protease proteolytic subunit"/>
    <property type="match status" value="1"/>
</dbReference>
<dbReference type="Gene3D" id="3.90.226.10">
    <property type="entry name" value="2-enoyl-CoA Hydratase, Chain A, domain 1"/>
    <property type="match status" value="1"/>
</dbReference>
<dbReference type="HAMAP" id="MF_00444">
    <property type="entry name" value="ClpP"/>
    <property type="match status" value="1"/>
</dbReference>
<dbReference type="InterPro" id="IPR001907">
    <property type="entry name" value="ClpP"/>
</dbReference>
<dbReference type="InterPro" id="IPR029045">
    <property type="entry name" value="ClpP/crotonase-like_dom_sf"/>
</dbReference>
<dbReference type="InterPro" id="IPR023562">
    <property type="entry name" value="ClpP/TepA"/>
</dbReference>
<dbReference type="InterPro" id="IPR033135">
    <property type="entry name" value="ClpP_His_AS"/>
</dbReference>
<dbReference type="InterPro" id="IPR018215">
    <property type="entry name" value="ClpP_Ser_AS"/>
</dbReference>
<dbReference type="NCBIfam" id="TIGR00493">
    <property type="entry name" value="clpP"/>
    <property type="match status" value="1"/>
</dbReference>
<dbReference type="NCBIfam" id="NF001368">
    <property type="entry name" value="PRK00277.1"/>
    <property type="match status" value="1"/>
</dbReference>
<dbReference type="NCBIfam" id="NF009205">
    <property type="entry name" value="PRK12553.1"/>
    <property type="match status" value="1"/>
</dbReference>
<dbReference type="PANTHER" id="PTHR10381">
    <property type="entry name" value="ATP-DEPENDENT CLP PROTEASE PROTEOLYTIC SUBUNIT"/>
    <property type="match status" value="1"/>
</dbReference>
<dbReference type="PANTHER" id="PTHR10381:SF70">
    <property type="entry name" value="ATP-DEPENDENT CLP PROTEASE PROTEOLYTIC SUBUNIT"/>
    <property type="match status" value="1"/>
</dbReference>
<dbReference type="Pfam" id="PF00574">
    <property type="entry name" value="CLP_protease"/>
    <property type="match status" value="1"/>
</dbReference>
<dbReference type="PRINTS" id="PR00127">
    <property type="entry name" value="CLPPROTEASEP"/>
</dbReference>
<dbReference type="SUPFAM" id="SSF52096">
    <property type="entry name" value="ClpP/crotonase"/>
    <property type="match status" value="1"/>
</dbReference>
<dbReference type="PROSITE" id="PS00382">
    <property type="entry name" value="CLP_PROTEASE_HIS"/>
    <property type="match status" value="1"/>
</dbReference>
<dbReference type="PROSITE" id="PS00381">
    <property type="entry name" value="CLP_PROTEASE_SER"/>
    <property type="match status" value="1"/>
</dbReference>
<organism>
    <name type="scientific">Staphylococcus aureus (strain MRSA252)</name>
    <dbReference type="NCBI Taxonomy" id="282458"/>
    <lineage>
        <taxon>Bacteria</taxon>
        <taxon>Bacillati</taxon>
        <taxon>Bacillota</taxon>
        <taxon>Bacilli</taxon>
        <taxon>Bacillales</taxon>
        <taxon>Staphylococcaceae</taxon>
        <taxon>Staphylococcus</taxon>
    </lineage>
</organism>
<sequence>MNLIPTVIETTNRGERAYDIYSRLLKDRIIMLGSQIDDNVANSIVSQLLFLQAQDSEKDIYLYINSPGGSVTAGFAIYDTIQHIKPDVQTICIGMAASMGSFLLAAGAKGKRFALPNAEVMIHQPLGGAQGQATEIEIAANHILKTREKLNRILSERTGQSIEKIQKDTDRDNFLTAEEAKEYGLIDEVMVPETK</sequence>
<comment type="function">
    <text evidence="1">Cleaves peptides in various proteins in a process that requires ATP hydrolysis. Has a chymotrypsin-like activity. Plays a major role in the degradation of misfolded proteins.</text>
</comment>
<comment type="catalytic activity">
    <reaction evidence="1">
        <text>Hydrolysis of proteins to small peptides in the presence of ATP and magnesium. alpha-casein is the usual test substrate. In the absence of ATP, only oligopeptides shorter than five residues are hydrolyzed (such as succinyl-Leu-Tyr-|-NHMec, and Leu-Tyr-Leu-|-Tyr-Trp, in which cleavage of the -Tyr-|-Leu- and -Tyr-|-Trp bonds also occurs).</text>
        <dbReference type="EC" id="3.4.21.92"/>
    </reaction>
</comment>
<comment type="subunit">
    <text evidence="1">Fourteen ClpP subunits assemble into 2 heptameric rings which stack back to back to give a disk-like structure with a central cavity, resembling the structure of eukaryotic proteasomes.</text>
</comment>
<comment type="subcellular location">
    <subcellularLocation>
        <location evidence="1">Cytoplasm</location>
    </subcellularLocation>
</comment>
<comment type="similarity">
    <text evidence="1">Belongs to the peptidase S14 family.</text>
</comment>